<accession>B1AIS8</accession>
<comment type="function">
    <text evidence="1">Has an important function as a repair enzyme for proteins that have been inactivated by oxidation. Catalyzes the reversible oxidation-reduction of methionine sulfoxide in proteins to methionine.</text>
</comment>
<comment type="catalytic activity">
    <reaction evidence="1">
        <text>L-methionyl-[protein] + [thioredoxin]-disulfide + H2O = L-methionyl-(S)-S-oxide-[protein] + [thioredoxin]-dithiol</text>
        <dbReference type="Rhea" id="RHEA:14217"/>
        <dbReference type="Rhea" id="RHEA-COMP:10698"/>
        <dbReference type="Rhea" id="RHEA-COMP:10700"/>
        <dbReference type="Rhea" id="RHEA-COMP:12313"/>
        <dbReference type="Rhea" id="RHEA-COMP:12315"/>
        <dbReference type="ChEBI" id="CHEBI:15377"/>
        <dbReference type="ChEBI" id="CHEBI:16044"/>
        <dbReference type="ChEBI" id="CHEBI:29950"/>
        <dbReference type="ChEBI" id="CHEBI:44120"/>
        <dbReference type="ChEBI" id="CHEBI:50058"/>
        <dbReference type="EC" id="1.8.4.11"/>
    </reaction>
</comment>
<comment type="catalytic activity">
    <reaction evidence="1">
        <text>[thioredoxin]-disulfide + L-methionine + H2O = L-methionine (S)-S-oxide + [thioredoxin]-dithiol</text>
        <dbReference type="Rhea" id="RHEA:19993"/>
        <dbReference type="Rhea" id="RHEA-COMP:10698"/>
        <dbReference type="Rhea" id="RHEA-COMP:10700"/>
        <dbReference type="ChEBI" id="CHEBI:15377"/>
        <dbReference type="ChEBI" id="CHEBI:29950"/>
        <dbReference type="ChEBI" id="CHEBI:50058"/>
        <dbReference type="ChEBI" id="CHEBI:57844"/>
        <dbReference type="ChEBI" id="CHEBI:58772"/>
        <dbReference type="EC" id="1.8.4.11"/>
    </reaction>
</comment>
<comment type="similarity">
    <text evidence="1">Belongs to the MsrA Met sulfoxide reductase family.</text>
</comment>
<organism>
    <name type="scientific">Ureaplasma parvum serovar 3 (strain ATCC 27815 / 27 / NCTC 11736)</name>
    <dbReference type="NCBI Taxonomy" id="505682"/>
    <lineage>
        <taxon>Bacteria</taxon>
        <taxon>Bacillati</taxon>
        <taxon>Mycoplasmatota</taxon>
        <taxon>Mycoplasmoidales</taxon>
        <taxon>Mycoplasmoidaceae</taxon>
        <taxon>Ureaplasma</taxon>
    </lineage>
</organism>
<reference key="1">
    <citation type="submission" date="2008-02" db="EMBL/GenBank/DDBJ databases">
        <title>Genome sequence of Ureaplasma parvum serovar 3.</title>
        <authorList>
            <person name="Methe B.A."/>
            <person name="Glass J."/>
            <person name="Waites K."/>
            <person name="Shrivastava S."/>
        </authorList>
    </citation>
    <scope>NUCLEOTIDE SEQUENCE [LARGE SCALE GENOMIC DNA]</scope>
    <source>
        <strain>ATCC 27815 / 27 / NCTC 11736</strain>
    </source>
</reference>
<feature type="chain" id="PRO_1000087361" description="Peptide methionine sulfoxide reductase MsrA">
    <location>
        <begin position="1"/>
        <end position="165"/>
    </location>
</feature>
<feature type="active site" evidence="1">
    <location>
        <position position="11"/>
    </location>
</feature>
<proteinExistence type="inferred from homology"/>
<protein>
    <recommendedName>
        <fullName evidence="1">Peptide methionine sulfoxide reductase MsrA</fullName>
        <shortName evidence="1">Protein-methionine-S-oxide reductase</shortName>
        <ecNumber evidence="1">1.8.4.11</ecNumber>
    </recommendedName>
    <alternativeName>
        <fullName evidence="1">Peptide-methionine (S)-S-oxide reductase</fullName>
        <shortName evidence="1">Peptide Met(O) reductase</shortName>
    </alternativeName>
</protein>
<name>MSRA_UREP2</name>
<gene>
    <name evidence="1" type="primary">msrA</name>
    <name type="ordered locus">UPA3_0298</name>
</gene>
<evidence type="ECO:0000255" key="1">
    <source>
        <dbReference type="HAMAP-Rule" id="MF_01401"/>
    </source>
</evidence>
<keyword id="KW-0560">Oxidoreductase</keyword>
<dbReference type="EC" id="1.8.4.11" evidence="1"/>
<dbReference type="EMBL" id="CP000942">
    <property type="protein sequence ID" value="ACA33051.1"/>
    <property type="molecule type" value="Genomic_DNA"/>
</dbReference>
<dbReference type="RefSeq" id="WP_006688929.1">
    <property type="nucleotide sequence ID" value="NC_010503.1"/>
</dbReference>
<dbReference type="SMR" id="B1AIS8"/>
<dbReference type="GeneID" id="29672509"/>
<dbReference type="KEGG" id="upa:UPA3_0298"/>
<dbReference type="HOGENOM" id="CLU_031040_10_2_14"/>
<dbReference type="Proteomes" id="UP000002162">
    <property type="component" value="Chromosome"/>
</dbReference>
<dbReference type="GO" id="GO:0005737">
    <property type="term" value="C:cytoplasm"/>
    <property type="evidence" value="ECO:0007669"/>
    <property type="project" value="TreeGrafter"/>
</dbReference>
<dbReference type="GO" id="GO:0036456">
    <property type="term" value="F:L-methionine-(S)-S-oxide reductase activity"/>
    <property type="evidence" value="ECO:0007669"/>
    <property type="project" value="TreeGrafter"/>
</dbReference>
<dbReference type="GO" id="GO:0008113">
    <property type="term" value="F:peptide-methionine (S)-S-oxide reductase activity"/>
    <property type="evidence" value="ECO:0007669"/>
    <property type="project" value="UniProtKB-UniRule"/>
</dbReference>
<dbReference type="GO" id="GO:0034599">
    <property type="term" value="P:cellular response to oxidative stress"/>
    <property type="evidence" value="ECO:0007669"/>
    <property type="project" value="TreeGrafter"/>
</dbReference>
<dbReference type="GO" id="GO:0036211">
    <property type="term" value="P:protein modification process"/>
    <property type="evidence" value="ECO:0007669"/>
    <property type="project" value="UniProtKB-UniRule"/>
</dbReference>
<dbReference type="Gene3D" id="3.30.1060.10">
    <property type="entry name" value="Peptide methionine sulphoxide reductase MsrA"/>
    <property type="match status" value="1"/>
</dbReference>
<dbReference type="HAMAP" id="MF_01401">
    <property type="entry name" value="MsrA"/>
    <property type="match status" value="1"/>
</dbReference>
<dbReference type="InterPro" id="IPR002569">
    <property type="entry name" value="Met_Sox_Rdtase_MsrA_dom"/>
</dbReference>
<dbReference type="InterPro" id="IPR036509">
    <property type="entry name" value="Met_Sox_Rdtase_MsrA_sf"/>
</dbReference>
<dbReference type="InterPro" id="IPR050162">
    <property type="entry name" value="MsrA_MetSO_reductase"/>
</dbReference>
<dbReference type="NCBIfam" id="TIGR00401">
    <property type="entry name" value="msrA"/>
    <property type="match status" value="1"/>
</dbReference>
<dbReference type="PANTHER" id="PTHR42799">
    <property type="entry name" value="MITOCHONDRIAL PEPTIDE METHIONINE SULFOXIDE REDUCTASE"/>
    <property type="match status" value="1"/>
</dbReference>
<dbReference type="PANTHER" id="PTHR42799:SF2">
    <property type="entry name" value="MITOCHONDRIAL PEPTIDE METHIONINE SULFOXIDE REDUCTASE"/>
    <property type="match status" value="1"/>
</dbReference>
<dbReference type="Pfam" id="PF01625">
    <property type="entry name" value="PMSR"/>
    <property type="match status" value="1"/>
</dbReference>
<dbReference type="SUPFAM" id="SSF55068">
    <property type="entry name" value="Peptide methionine sulfoxide reductase"/>
    <property type="match status" value="1"/>
</dbReference>
<sequence>MIKSIWIAGGCFWGIQKYFDSIIGVNHTVVGYSQGNVINPSYEQVCTQTTNHTETVQIDYDDRFVSLISILEHLYQIIDPFSLNKQGDDVGSQYRSGIYYVDHDDEFIIKDFLLKKQNQTPKKIMIEVERLRNFNIAEEYHQKYLDKNPNSYCHVDLSLSKKEFR</sequence>